<sequence length="488" mass="53386">MTLRFYDTASAEVRNFVPLVAGRASLYYCGATVQGMPHVGHIRSAIAFDQLTRWLTHRGLRVTVVRNVTDIDDKILAKSEASFASGFQPEPGEIPGEEWWALAYRYEQEFLKAYDALGVSRPTYEPRATGHIPEMHALIQQLIDRGHAYPALDDSGDVYFDVRSWSKYGALTRQNIDDMQAAADADPRGKRDPRDFALWKGSKEGEPATASWASPWGAGRPGWHLECSAMVTKYLGTEFDIHGGGLDLRFPHHENEMAQSQAAGHPFANFWMHNGMVTYEGEKMSKSIGNTISPAEMLELASPRVVRYYLGQAHYRSILDYRPTSLQEAAAAVERIDGFLAKAVARFGTDFGFVEGDYGPSTGAVEAFYAAMDDDLNVPRALAALHETVRAGNTALADGDDDSARKAMNAVVIMTDVLGLNAVAGSEKTSTREAEALAVLVEAQLAARATARAEKDWSASDAIRDTLNEAGVVVEDGADGPTWSLKRD</sequence>
<reference key="1">
    <citation type="submission" date="2009-01" db="EMBL/GenBank/DDBJ databases">
        <title>Complete sequence of chromosome of Arthrobacter chlorophenolicus A6.</title>
        <authorList>
            <consortium name="US DOE Joint Genome Institute"/>
            <person name="Lucas S."/>
            <person name="Copeland A."/>
            <person name="Lapidus A."/>
            <person name="Glavina del Rio T."/>
            <person name="Tice H."/>
            <person name="Bruce D."/>
            <person name="Goodwin L."/>
            <person name="Pitluck S."/>
            <person name="Goltsman E."/>
            <person name="Clum A."/>
            <person name="Larimer F."/>
            <person name="Land M."/>
            <person name="Hauser L."/>
            <person name="Kyrpides N."/>
            <person name="Mikhailova N."/>
            <person name="Jansson J."/>
            <person name="Richardson P."/>
        </authorList>
    </citation>
    <scope>NUCLEOTIDE SEQUENCE [LARGE SCALE GENOMIC DNA]</scope>
    <source>
        <strain>ATCC 700700 / DSM 12829 / CIP 107037 / JCM 12360 / KCTC 9906 / NCIMB 13794 / A6</strain>
    </source>
</reference>
<keyword id="KW-0030">Aminoacyl-tRNA synthetase</keyword>
<keyword id="KW-0067">ATP-binding</keyword>
<keyword id="KW-0963">Cytoplasm</keyword>
<keyword id="KW-0436">Ligase</keyword>
<keyword id="KW-0479">Metal-binding</keyword>
<keyword id="KW-0547">Nucleotide-binding</keyword>
<keyword id="KW-0648">Protein biosynthesis</keyword>
<keyword id="KW-0862">Zinc</keyword>
<comment type="catalytic activity">
    <reaction evidence="1">
        <text>tRNA(Cys) + L-cysteine + ATP = L-cysteinyl-tRNA(Cys) + AMP + diphosphate</text>
        <dbReference type="Rhea" id="RHEA:17773"/>
        <dbReference type="Rhea" id="RHEA-COMP:9661"/>
        <dbReference type="Rhea" id="RHEA-COMP:9679"/>
        <dbReference type="ChEBI" id="CHEBI:30616"/>
        <dbReference type="ChEBI" id="CHEBI:33019"/>
        <dbReference type="ChEBI" id="CHEBI:35235"/>
        <dbReference type="ChEBI" id="CHEBI:78442"/>
        <dbReference type="ChEBI" id="CHEBI:78517"/>
        <dbReference type="ChEBI" id="CHEBI:456215"/>
        <dbReference type="EC" id="6.1.1.16"/>
    </reaction>
</comment>
<comment type="cofactor">
    <cofactor evidence="1">
        <name>Zn(2+)</name>
        <dbReference type="ChEBI" id="CHEBI:29105"/>
    </cofactor>
    <text evidence="1">Binds 1 zinc ion per subunit.</text>
</comment>
<comment type="subunit">
    <text evidence="1">Monomer.</text>
</comment>
<comment type="subcellular location">
    <subcellularLocation>
        <location evidence="1">Cytoplasm</location>
    </subcellularLocation>
</comment>
<comment type="similarity">
    <text evidence="1">Belongs to the class-I aminoacyl-tRNA synthetase family.</text>
</comment>
<proteinExistence type="inferred from homology"/>
<feature type="chain" id="PRO_1000199033" description="Cysteine--tRNA ligase">
    <location>
        <begin position="1"/>
        <end position="488"/>
    </location>
</feature>
<feature type="short sequence motif" description="'HIGH' region">
    <location>
        <begin position="31"/>
        <end position="41"/>
    </location>
</feature>
<feature type="short sequence motif" description="'KMSKS' region">
    <location>
        <begin position="283"/>
        <end position="287"/>
    </location>
</feature>
<feature type="binding site" evidence="1">
    <location>
        <position position="29"/>
    </location>
    <ligand>
        <name>Zn(2+)</name>
        <dbReference type="ChEBI" id="CHEBI:29105"/>
    </ligand>
</feature>
<feature type="binding site" evidence="1">
    <location>
        <position position="227"/>
    </location>
    <ligand>
        <name>Zn(2+)</name>
        <dbReference type="ChEBI" id="CHEBI:29105"/>
    </ligand>
</feature>
<feature type="binding site" evidence="1">
    <location>
        <position position="252"/>
    </location>
    <ligand>
        <name>Zn(2+)</name>
        <dbReference type="ChEBI" id="CHEBI:29105"/>
    </ligand>
</feature>
<feature type="binding site" evidence="1">
    <location>
        <position position="256"/>
    </location>
    <ligand>
        <name>Zn(2+)</name>
        <dbReference type="ChEBI" id="CHEBI:29105"/>
    </ligand>
</feature>
<feature type="binding site" evidence="1">
    <location>
        <position position="286"/>
    </location>
    <ligand>
        <name>ATP</name>
        <dbReference type="ChEBI" id="CHEBI:30616"/>
    </ligand>
</feature>
<accession>B8HCR7</accession>
<name>SYC_PSECP</name>
<protein>
    <recommendedName>
        <fullName evidence="1">Cysteine--tRNA ligase</fullName>
        <ecNumber evidence="1">6.1.1.16</ecNumber>
    </recommendedName>
    <alternativeName>
        <fullName evidence="1">Cysteinyl-tRNA synthetase</fullName>
        <shortName evidence="1">CysRS</shortName>
    </alternativeName>
</protein>
<dbReference type="EC" id="6.1.1.16" evidence="1"/>
<dbReference type="EMBL" id="CP001341">
    <property type="protein sequence ID" value="ACL38850.1"/>
    <property type="molecule type" value="Genomic_DNA"/>
</dbReference>
<dbReference type="RefSeq" id="WP_015936074.1">
    <property type="nucleotide sequence ID" value="NC_011886.1"/>
</dbReference>
<dbReference type="SMR" id="B8HCR7"/>
<dbReference type="STRING" id="452863.Achl_0855"/>
<dbReference type="KEGG" id="ach:Achl_0855"/>
<dbReference type="eggNOG" id="COG0215">
    <property type="taxonomic scope" value="Bacteria"/>
</dbReference>
<dbReference type="HOGENOM" id="CLU_013528_0_1_11"/>
<dbReference type="OrthoDB" id="9815130at2"/>
<dbReference type="Proteomes" id="UP000002505">
    <property type="component" value="Chromosome"/>
</dbReference>
<dbReference type="GO" id="GO:0005829">
    <property type="term" value="C:cytosol"/>
    <property type="evidence" value="ECO:0007669"/>
    <property type="project" value="TreeGrafter"/>
</dbReference>
<dbReference type="GO" id="GO:0005524">
    <property type="term" value="F:ATP binding"/>
    <property type="evidence" value="ECO:0007669"/>
    <property type="project" value="UniProtKB-UniRule"/>
</dbReference>
<dbReference type="GO" id="GO:0004817">
    <property type="term" value="F:cysteine-tRNA ligase activity"/>
    <property type="evidence" value="ECO:0007669"/>
    <property type="project" value="UniProtKB-UniRule"/>
</dbReference>
<dbReference type="GO" id="GO:0008270">
    <property type="term" value="F:zinc ion binding"/>
    <property type="evidence" value="ECO:0007669"/>
    <property type="project" value="UniProtKB-UniRule"/>
</dbReference>
<dbReference type="GO" id="GO:0006423">
    <property type="term" value="P:cysteinyl-tRNA aminoacylation"/>
    <property type="evidence" value="ECO:0007669"/>
    <property type="project" value="UniProtKB-UniRule"/>
</dbReference>
<dbReference type="CDD" id="cd00672">
    <property type="entry name" value="CysRS_core"/>
    <property type="match status" value="1"/>
</dbReference>
<dbReference type="FunFam" id="3.40.50.620:FF:000068">
    <property type="entry name" value="Cysteine--tRNA ligase"/>
    <property type="match status" value="1"/>
</dbReference>
<dbReference type="Gene3D" id="1.20.120.1910">
    <property type="entry name" value="Cysteine-tRNA ligase, C-terminal anti-codon recognition domain"/>
    <property type="match status" value="1"/>
</dbReference>
<dbReference type="Gene3D" id="3.40.50.620">
    <property type="entry name" value="HUPs"/>
    <property type="match status" value="1"/>
</dbReference>
<dbReference type="HAMAP" id="MF_00041">
    <property type="entry name" value="Cys_tRNA_synth"/>
    <property type="match status" value="1"/>
</dbReference>
<dbReference type="InterPro" id="IPR015803">
    <property type="entry name" value="Cys-tRNA-ligase"/>
</dbReference>
<dbReference type="InterPro" id="IPR015273">
    <property type="entry name" value="Cys-tRNA-synt_Ia_DALR"/>
</dbReference>
<dbReference type="InterPro" id="IPR024909">
    <property type="entry name" value="Cys-tRNA/MSH_ligase"/>
</dbReference>
<dbReference type="InterPro" id="IPR056411">
    <property type="entry name" value="CysS_C"/>
</dbReference>
<dbReference type="InterPro" id="IPR014729">
    <property type="entry name" value="Rossmann-like_a/b/a_fold"/>
</dbReference>
<dbReference type="InterPro" id="IPR032678">
    <property type="entry name" value="tRNA-synt_1_cat_dom"/>
</dbReference>
<dbReference type="InterPro" id="IPR009080">
    <property type="entry name" value="tRNAsynth_Ia_anticodon-bd"/>
</dbReference>
<dbReference type="NCBIfam" id="TIGR00435">
    <property type="entry name" value="cysS"/>
    <property type="match status" value="1"/>
</dbReference>
<dbReference type="PANTHER" id="PTHR10890:SF30">
    <property type="entry name" value="CYSTEINE--TRNA LIGASE"/>
    <property type="match status" value="1"/>
</dbReference>
<dbReference type="PANTHER" id="PTHR10890">
    <property type="entry name" value="CYSTEINYL-TRNA SYNTHETASE"/>
    <property type="match status" value="1"/>
</dbReference>
<dbReference type="Pfam" id="PF23493">
    <property type="entry name" value="CysS_C"/>
    <property type="match status" value="1"/>
</dbReference>
<dbReference type="Pfam" id="PF09190">
    <property type="entry name" value="DALR_2"/>
    <property type="match status" value="1"/>
</dbReference>
<dbReference type="Pfam" id="PF01406">
    <property type="entry name" value="tRNA-synt_1e"/>
    <property type="match status" value="1"/>
</dbReference>
<dbReference type="PRINTS" id="PR00983">
    <property type="entry name" value="TRNASYNTHCYS"/>
</dbReference>
<dbReference type="SMART" id="SM00840">
    <property type="entry name" value="DALR_2"/>
    <property type="match status" value="1"/>
</dbReference>
<dbReference type="SUPFAM" id="SSF47323">
    <property type="entry name" value="Anticodon-binding domain of a subclass of class I aminoacyl-tRNA synthetases"/>
    <property type="match status" value="1"/>
</dbReference>
<dbReference type="SUPFAM" id="SSF52374">
    <property type="entry name" value="Nucleotidylyl transferase"/>
    <property type="match status" value="1"/>
</dbReference>
<evidence type="ECO:0000255" key="1">
    <source>
        <dbReference type="HAMAP-Rule" id="MF_00041"/>
    </source>
</evidence>
<gene>
    <name evidence="1" type="primary">cysS</name>
    <name type="ordered locus">Achl_0855</name>
</gene>
<organism>
    <name type="scientific">Pseudarthrobacter chlorophenolicus (strain ATCC 700700 / DSM 12829 / CIP 107037 / JCM 12360 / KCTC 9906 / NCIMB 13794 / A6)</name>
    <name type="common">Arthrobacter chlorophenolicus</name>
    <dbReference type="NCBI Taxonomy" id="452863"/>
    <lineage>
        <taxon>Bacteria</taxon>
        <taxon>Bacillati</taxon>
        <taxon>Actinomycetota</taxon>
        <taxon>Actinomycetes</taxon>
        <taxon>Micrococcales</taxon>
        <taxon>Micrococcaceae</taxon>
        <taxon>Pseudarthrobacter</taxon>
    </lineage>
</organism>